<gene>
    <name type="primary">IYD</name>
    <name type="synonym">DEHAL1</name>
</gene>
<accession>Q5REW1</accession>
<comment type="function">
    <text evidence="1">Catalyzes the dehalogenation of halotyrosines such as 3-bromo-L-tyrosine, 3-chloro-L-tyrosine, 3-iodo-L-tyrosine and 3,5-diiodo-L-tyrosine. During thyroid hormone biosynthesis, facilitates iodide salvage by catalysing the oxidative NADPH-dependent deiodination of the halogenated by-products of thyroid hormone production, monoiodotyrosine (L-MIT) and diiodotyrosine (L-DIT). The scavanged iodide can then reenter the hormone-producing pathways. Acts more efficiently on 3-iodo-L-tyrosine than 3,5-diiodo-L-tyrosine.</text>
</comment>
<comment type="catalytic activity">
    <reaction evidence="1">
        <text>2 iodide + L-tyrosine + 2 NADP(+) = 3,5-diiodo-L-tyrosine + 2 NADPH + H(+)</text>
        <dbReference type="Rhea" id="RHEA:32479"/>
        <dbReference type="ChEBI" id="CHEBI:15378"/>
        <dbReference type="ChEBI" id="CHEBI:16382"/>
        <dbReference type="ChEBI" id="CHEBI:57506"/>
        <dbReference type="ChEBI" id="CHEBI:57783"/>
        <dbReference type="ChEBI" id="CHEBI:58315"/>
        <dbReference type="ChEBI" id="CHEBI:58349"/>
        <dbReference type="EC" id="1.21.1.1"/>
    </reaction>
</comment>
<comment type="catalytic activity">
    <reaction evidence="1">
        <text>iodide + L-tyrosine + NADP(+) = 3-iodo-L-tyrosine + NADPH</text>
        <dbReference type="Rhea" id="RHEA:27453"/>
        <dbReference type="ChEBI" id="CHEBI:16382"/>
        <dbReference type="ChEBI" id="CHEBI:57783"/>
        <dbReference type="ChEBI" id="CHEBI:58315"/>
        <dbReference type="ChEBI" id="CHEBI:58349"/>
        <dbReference type="ChEBI" id="CHEBI:59898"/>
    </reaction>
    <physiologicalReaction direction="right-to-left" evidence="1">
        <dbReference type="Rhea" id="RHEA:27455"/>
    </physiologicalReaction>
</comment>
<comment type="catalytic activity">
    <reaction evidence="1">
        <text>3-iodo-L-tyrosine + iodide + NADP(+) = 3,5-diiodo-L-tyrosine + NADPH + H(+)</text>
        <dbReference type="Rhea" id="RHEA:27457"/>
        <dbReference type="ChEBI" id="CHEBI:15378"/>
        <dbReference type="ChEBI" id="CHEBI:16382"/>
        <dbReference type="ChEBI" id="CHEBI:57506"/>
        <dbReference type="ChEBI" id="CHEBI:57783"/>
        <dbReference type="ChEBI" id="CHEBI:58349"/>
        <dbReference type="ChEBI" id="CHEBI:59898"/>
    </reaction>
    <physiologicalReaction direction="right-to-left" evidence="1">
        <dbReference type="Rhea" id="RHEA:27459"/>
    </physiologicalReaction>
</comment>
<comment type="catalytic activity">
    <reaction evidence="1">
        <text>L-tyrosine + chloride + NADP(+) = 3-chloro-L-tyrosine + NADPH</text>
        <dbReference type="Rhea" id="RHEA:70343"/>
        <dbReference type="ChEBI" id="CHEBI:17996"/>
        <dbReference type="ChEBI" id="CHEBI:57783"/>
        <dbReference type="ChEBI" id="CHEBI:58315"/>
        <dbReference type="ChEBI" id="CHEBI:58349"/>
        <dbReference type="ChEBI" id="CHEBI:189422"/>
    </reaction>
    <physiologicalReaction direction="right-to-left" evidence="1">
        <dbReference type="Rhea" id="RHEA:70345"/>
    </physiologicalReaction>
</comment>
<comment type="catalytic activity">
    <reaction evidence="1">
        <text>bromide + L-tyrosine + NADP(+) = 3-bromo-L-tyrosine + NADPH</text>
        <dbReference type="Rhea" id="RHEA:70347"/>
        <dbReference type="ChEBI" id="CHEBI:15858"/>
        <dbReference type="ChEBI" id="CHEBI:57783"/>
        <dbReference type="ChEBI" id="CHEBI:58315"/>
        <dbReference type="ChEBI" id="CHEBI:58349"/>
        <dbReference type="ChEBI" id="CHEBI:189423"/>
    </reaction>
    <physiologicalReaction direction="right-to-left" evidence="1">
        <dbReference type="Rhea" id="RHEA:70349"/>
    </physiologicalReaction>
</comment>
<comment type="cofactor">
    <cofactor evidence="1">
        <name>FMN</name>
        <dbReference type="ChEBI" id="CHEBI:58210"/>
    </cofactor>
</comment>
<comment type="subunit">
    <text evidence="1">Homodimer.</text>
</comment>
<comment type="subcellular location">
    <subcellularLocation>
        <location evidence="1">Cell membrane</location>
        <topology evidence="1">Single-pass membrane protein</topology>
    </subcellularLocation>
    <subcellularLocation>
        <location evidence="1">Cytoplasmic vesicle membrane</location>
    </subcellularLocation>
</comment>
<comment type="similarity">
    <text evidence="5">Belongs to the nitroreductase family.</text>
</comment>
<organism>
    <name type="scientific">Pongo abelii</name>
    <name type="common">Sumatran orangutan</name>
    <name type="synonym">Pongo pygmaeus abelii</name>
    <dbReference type="NCBI Taxonomy" id="9601"/>
    <lineage>
        <taxon>Eukaryota</taxon>
        <taxon>Metazoa</taxon>
        <taxon>Chordata</taxon>
        <taxon>Craniata</taxon>
        <taxon>Vertebrata</taxon>
        <taxon>Euteleostomi</taxon>
        <taxon>Mammalia</taxon>
        <taxon>Eutheria</taxon>
        <taxon>Euarchontoglires</taxon>
        <taxon>Primates</taxon>
        <taxon>Haplorrhini</taxon>
        <taxon>Catarrhini</taxon>
        <taxon>Hominidae</taxon>
        <taxon>Pongo</taxon>
    </lineage>
</organism>
<feature type="chain" id="PRO_0000230281" description="Iodotyrosine deiodinase 1">
    <location>
        <begin position="1"/>
        <end position="289"/>
    </location>
</feature>
<feature type="transmembrane region" description="Helical" evidence="3">
    <location>
        <begin position="1"/>
        <end position="21"/>
    </location>
</feature>
<feature type="region of interest" description="Disordered" evidence="4">
    <location>
        <begin position="47"/>
        <end position="69"/>
    </location>
</feature>
<feature type="compositionally biased region" description="Basic and acidic residues" evidence="4">
    <location>
        <begin position="47"/>
        <end position="58"/>
    </location>
</feature>
<feature type="compositionally biased region" description="Acidic residues" evidence="4">
    <location>
        <begin position="59"/>
        <end position="69"/>
    </location>
</feature>
<feature type="binding site" evidence="1">
    <location>
        <begin position="100"/>
        <end position="104"/>
    </location>
    <ligand>
        <name>FMN</name>
        <dbReference type="ChEBI" id="CHEBI:58210"/>
    </ligand>
</feature>
<feature type="binding site" evidence="2">
    <location>
        <begin position="128"/>
        <end position="129"/>
    </location>
    <ligand>
        <name>FMN</name>
        <dbReference type="ChEBI" id="CHEBI:58210"/>
    </ligand>
</feature>
<feature type="binding site" evidence="1">
    <location>
        <position position="128"/>
    </location>
    <ligand>
        <name>FMN</name>
        <dbReference type="ChEBI" id="CHEBI:58210"/>
    </ligand>
</feature>
<feature type="binding site" evidence="2">
    <location>
        <position position="130"/>
    </location>
    <ligand>
        <name>3,5-diiodo-L-tyrosine</name>
        <dbReference type="ChEBI" id="CHEBI:57506"/>
    </ligand>
</feature>
<feature type="binding site" evidence="2">
    <location>
        <position position="130"/>
    </location>
    <ligand>
        <name>3-iodo-L-tyrosine</name>
        <dbReference type="ChEBI" id="CHEBI:59898"/>
    </ligand>
</feature>
<feature type="binding site" evidence="2">
    <location>
        <position position="157"/>
    </location>
    <ligand>
        <name>3,5-diiodo-L-tyrosine</name>
        <dbReference type="ChEBI" id="CHEBI:57506"/>
    </ligand>
</feature>
<feature type="binding site" evidence="2">
    <location>
        <position position="157"/>
    </location>
    <ligand>
        <name>3-iodo-L-tyrosine</name>
        <dbReference type="ChEBI" id="CHEBI:59898"/>
    </ligand>
</feature>
<feature type="binding site" evidence="2">
    <location>
        <position position="161"/>
    </location>
    <ligand>
        <name>3,5-diiodo-L-tyrosine</name>
        <dbReference type="ChEBI" id="CHEBI:57506"/>
    </ligand>
</feature>
<feature type="binding site" evidence="2">
    <location>
        <position position="161"/>
    </location>
    <ligand>
        <name>3-iodo-L-tyrosine</name>
        <dbReference type="ChEBI" id="CHEBI:59898"/>
    </ligand>
</feature>
<feature type="binding site" evidence="2">
    <location>
        <position position="182"/>
    </location>
    <ligand>
        <name>3,5-diiodo-L-tyrosine</name>
        <dbReference type="ChEBI" id="CHEBI:57506"/>
    </ligand>
</feature>
<feature type="binding site" evidence="2">
    <location>
        <position position="182"/>
    </location>
    <ligand>
        <name>3-iodo-L-tyrosine</name>
        <dbReference type="ChEBI" id="CHEBI:59898"/>
    </ligand>
</feature>
<feature type="binding site" evidence="1">
    <location>
        <begin position="237"/>
        <end position="239"/>
    </location>
    <ligand>
        <name>FMN</name>
        <dbReference type="ChEBI" id="CHEBI:58210"/>
    </ligand>
</feature>
<feature type="binding site" evidence="1">
    <location>
        <position position="279"/>
    </location>
    <ligand>
        <name>FMN</name>
        <dbReference type="ChEBI" id="CHEBI:58210"/>
    </ligand>
</feature>
<reference key="1">
    <citation type="submission" date="2004-11" db="EMBL/GenBank/DDBJ databases">
        <authorList>
            <consortium name="The German cDNA consortium"/>
        </authorList>
    </citation>
    <scope>NUCLEOTIDE SEQUENCE [LARGE SCALE MRNA]</scope>
    <source>
        <tissue>Kidney</tissue>
    </source>
</reference>
<proteinExistence type="evidence at transcript level"/>
<keyword id="KW-1003">Cell membrane</keyword>
<keyword id="KW-0968">Cytoplasmic vesicle</keyword>
<keyword id="KW-0285">Flavoprotein</keyword>
<keyword id="KW-0288">FMN</keyword>
<keyword id="KW-0472">Membrane</keyword>
<keyword id="KW-0521">NADP</keyword>
<keyword id="KW-0560">Oxidoreductase</keyword>
<keyword id="KW-1185">Reference proteome</keyword>
<keyword id="KW-0812">Transmembrane</keyword>
<keyword id="KW-1133">Transmembrane helix</keyword>
<sequence>MYFLTPILVAILCILVVWIFKNADRSMEKKKGEARTRAEARPWVDEDLKDSSDLHQAEEDADEWQESEENVEHIPFSHTHYPEKEMVKRSREFYELLNKRRSVRFISNEQVPMEVIDNVIRTAGTAPSGAHTEPWTFVVVKDPDVKHKIRKIIEGEEEINYMKRMGHRWVTDLKKLRTNWIKEYLDTAPILILIFKQVHGFVANGKKKVHYYNEISVSIACGILLAALQNAGLVTVTTTPLNCGPRLRVLLGRPAHEKLLMLLPVGYPSKEAMVPDLKRKPLDQIMVMV</sequence>
<dbReference type="EC" id="1.21.1.1" evidence="1"/>
<dbReference type="EMBL" id="CR857405">
    <property type="protein sequence ID" value="CAH89696.1"/>
    <property type="molecule type" value="mRNA"/>
</dbReference>
<dbReference type="RefSeq" id="NP_001124546.1">
    <property type="nucleotide sequence ID" value="NM_001131074.1"/>
</dbReference>
<dbReference type="SMR" id="Q5REW1"/>
<dbReference type="FunCoup" id="Q5REW1">
    <property type="interactions" value="5"/>
</dbReference>
<dbReference type="STRING" id="9601.ENSPPYP00000019149"/>
<dbReference type="GeneID" id="100127058"/>
<dbReference type="KEGG" id="pon:100127058"/>
<dbReference type="CTD" id="389434"/>
<dbReference type="eggNOG" id="KOG3936">
    <property type="taxonomic scope" value="Eukaryota"/>
</dbReference>
<dbReference type="InParanoid" id="Q5REW1"/>
<dbReference type="OrthoDB" id="41362at2759"/>
<dbReference type="Proteomes" id="UP000001595">
    <property type="component" value="Unplaced"/>
</dbReference>
<dbReference type="GO" id="GO:0030659">
    <property type="term" value="C:cytoplasmic vesicle membrane"/>
    <property type="evidence" value="ECO:0000250"/>
    <property type="project" value="UniProtKB"/>
</dbReference>
<dbReference type="GO" id="GO:0005886">
    <property type="term" value="C:plasma membrane"/>
    <property type="evidence" value="ECO:0000250"/>
    <property type="project" value="UniProtKB"/>
</dbReference>
<dbReference type="GO" id="GO:0010181">
    <property type="term" value="F:FMN binding"/>
    <property type="evidence" value="ECO:0000250"/>
    <property type="project" value="UniProtKB"/>
</dbReference>
<dbReference type="GO" id="GO:0140616">
    <property type="term" value="F:iodotyrosine deiodinase activity"/>
    <property type="evidence" value="ECO:0000250"/>
    <property type="project" value="UniProtKB"/>
</dbReference>
<dbReference type="GO" id="GO:0042403">
    <property type="term" value="P:thyroid hormone metabolic process"/>
    <property type="evidence" value="ECO:0000250"/>
    <property type="project" value="UniProtKB"/>
</dbReference>
<dbReference type="GO" id="GO:0006570">
    <property type="term" value="P:tyrosine metabolic process"/>
    <property type="evidence" value="ECO:0000250"/>
    <property type="project" value="UniProtKB"/>
</dbReference>
<dbReference type="CDD" id="cd02144">
    <property type="entry name" value="iodotyrosine_dehalogenase"/>
    <property type="match status" value="1"/>
</dbReference>
<dbReference type="FunFam" id="3.40.109.10:FF:000004">
    <property type="entry name" value="Iodotyrosine deiodinase 1"/>
    <property type="match status" value="1"/>
</dbReference>
<dbReference type="Gene3D" id="3.40.109.10">
    <property type="entry name" value="NADH Oxidase"/>
    <property type="match status" value="1"/>
</dbReference>
<dbReference type="InterPro" id="IPR029479">
    <property type="entry name" value="Nitroreductase"/>
</dbReference>
<dbReference type="InterPro" id="IPR000415">
    <property type="entry name" value="Nitroreductase-like"/>
</dbReference>
<dbReference type="InterPro" id="IPR050627">
    <property type="entry name" value="Nitroreductase/BluB"/>
</dbReference>
<dbReference type="PANTHER" id="PTHR23026:SF90">
    <property type="entry name" value="IODOTYROSINE DEIODINASE 1"/>
    <property type="match status" value="1"/>
</dbReference>
<dbReference type="PANTHER" id="PTHR23026">
    <property type="entry name" value="NADPH NITROREDUCTASE"/>
    <property type="match status" value="1"/>
</dbReference>
<dbReference type="Pfam" id="PF00881">
    <property type="entry name" value="Nitroreductase"/>
    <property type="match status" value="1"/>
</dbReference>
<dbReference type="SUPFAM" id="SSF55469">
    <property type="entry name" value="FMN-dependent nitroreductase-like"/>
    <property type="match status" value="1"/>
</dbReference>
<name>IYD1_PONAB</name>
<evidence type="ECO:0000250" key="1">
    <source>
        <dbReference type="UniProtKB" id="Q6PHW0"/>
    </source>
</evidence>
<evidence type="ECO:0000250" key="2">
    <source>
        <dbReference type="UniProtKB" id="Q9DCX8"/>
    </source>
</evidence>
<evidence type="ECO:0000255" key="3"/>
<evidence type="ECO:0000256" key="4">
    <source>
        <dbReference type="SAM" id="MobiDB-lite"/>
    </source>
</evidence>
<evidence type="ECO:0000305" key="5"/>
<protein>
    <recommendedName>
        <fullName evidence="1">Iodotyrosine deiodinase 1</fullName>
        <shortName evidence="1">IYD-1</shortName>
        <ecNumber evidence="1">1.21.1.1</ecNumber>
    </recommendedName>
    <alternativeName>
        <fullName evidence="1">Iodotyrosine dehalogenase 1</fullName>
    </alternativeName>
</protein>